<name>ZIPA_XANC8</name>
<evidence type="ECO:0000255" key="1">
    <source>
        <dbReference type="HAMAP-Rule" id="MF_00509"/>
    </source>
</evidence>
<evidence type="ECO:0000256" key="2">
    <source>
        <dbReference type="SAM" id="MobiDB-lite"/>
    </source>
</evidence>
<dbReference type="EMBL" id="CP000050">
    <property type="protein sequence ID" value="AAY49715.1"/>
    <property type="molecule type" value="Genomic_DNA"/>
</dbReference>
<dbReference type="RefSeq" id="WP_011036750.1">
    <property type="nucleotide sequence ID" value="NZ_CP155948.1"/>
</dbReference>
<dbReference type="SMR" id="Q4UTA8"/>
<dbReference type="GeneID" id="58013840"/>
<dbReference type="KEGG" id="xcb:XC_2666"/>
<dbReference type="HOGENOM" id="CLU_030174_2_1_6"/>
<dbReference type="Proteomes" id="UP000000420">
    <property type="component" value="Chromosome"/>
</dbReference>
<dbReference type="GO" id="GO:0032153">
    <property type="term" value="C:cell division site"/>
    <property type="evidence" value="ECO:0007669"/>
    <property type="project" value="UniProtKB-UniRule"/>
</dbReference>
<dbReference type="GO" id="GO:0005886">
    <property type="term" value="C:plasma membrane"/>
    <property type="evidence" value="ECO:0007669"/>
    <property type="project" value="UniProtKB-SubCell"/>
</dbReference>
<dbReference type="GO" id="GO:0000917">
    <property type="term" value="P:division septum assembly"/>
    <property type="evidence" value="ECO:0007669"/>
    <property type="project" value="TreeGrafter"/>
</dbReference>
<dbReference type="GO" id="GO:0043093">
    <property type="term" value="P:FtsZ-dependent cytokinesis"/>
    <property type="evidence" value="ECO:0007669"/>
    <property type="project" value="UniProtKB-UniRule"/>
</dbReference>
<dbReference type="FunFam" id="3.30.1400.10:FF:000003">
    <property type="entry name" value="Cell division protein ZipA"/>
    <property type="match status" value="1"/>
</dbReference>
<dbReference type="Gene3D" id="3.30.1400.10">
    <property type="entry name" value="ZipA, C-terminal FtsZ-binding domain"/>
    <property type="match status" value="1"/>
</dbReference>
<dbReference type="HAMAP" id="MF_00509">
    <property type="entry name" value="ZipA"/>
    <property type="match status" value="1"/>
</dbReference>
<dbReference type="InterPro" id="IPR011919">
    <property type="entry name" value="Cell_div_ZipA"/>
</dbReference>
<dbReference type="InterPro" id="IPR007449">
    <property type="entry name" value="ZipA_FtsZ-bd_C"/>
</dbReference>
<dbReference type="InterPro" id="IPR036765">
    <property type="entry name" value="ZipA_FtsZ-bd_C_sf"/>
</dbReference>
<dbReference type="NCBIfam" id="TIGR02205">
    <property type="entry name" value="septum_zipA"/>
    <property type="match status" value="1"/>
</dbReference>
<dbReference type="PANTHER" id="PTHR38685">
    <property type="entry name" value="CELL DIVISION PROTEIN ZIPA"/>
    <property type="match status" value="1"/>
</dbReference>
<dbReference type="PANTHER" id="PTHR38685:SF1">
    <property type="entry name" value="CELL DIVISION PROTEIN ZIPA"/>
    <property type="match status" value="1"/>
</dbReference>
<dbReference type="Pfam" id="PF04354">
    <property type="entry name" value="ZipA_C"/>
    <property type="match status" value="1"/>
</dbReference>
<dbReference type="SMART" id="SM00771">
    <property type="entry name" value="ZipA_C"/>
    <property type="match status" value="1"/>
</dbReference>
<dbReference type="SUPFAM" id="SSF64383">
    <property type="entry name" value="Cell-division protein ZipA, C-terminal domain"/>
    <property type="match status" value="1"/>
</dbReference>
<feature type="chain" id="PRO_0000237140" description="Cell division protein ZipA">
    <location>
        <begin position="1"/>
        <end position="244"/>
    </location>
</feature>
<feature type="topological domain" description="Periplasmic" evidence="1">
    <location>
        <begin position="1"/>
        <end position="4"/>
    </location>
</feature>
<feature type="transmembrane region" description="Helical" evidence="1">
    <location>
        <begin position="5"/>
        <end position="25"/>
    </location>
</feature>
<feature type="topological domain" description="Cytoplasmic" evidence="1">
    <location>
        <begin position="26"/>
        <end position="244"/>
    </location>
</feature>
<feature type="region of interest" description="Disordered" evidence="2">
    <location>
        <begin position="30"/>
        <end position="91"/>
    </location>
</feature>
<feature type="compositionally biased region" description="Basic and acidic residues" evidence="2">
    <location>
        <begin position="35"/>
        <end position="50"/>
    </location>
</feature>
<protein>
    <recommendedName>
        <fullName evidence="1">Cell division protein ZipA</fullName>
    </recommendedName>
</protein>
<organism>
    <name type="scientific">Xanthomonas campestris pv. campestris (strain 8004)</name>
    <dbReference type="NCBI Taxonomy" id="314565"/>
    <lineage>
        <taxon>Bacteria</taxon>
        <taxon>Pseudomonadati</taxon>
        <taxon>Pseudomonadota</taxon>
        <taxon>Gammaproteobacteria</taxon>
        <taxon>Lysobacterales</taxon>
        <taxon>Lysobacteraceae</taxon>
        <taxon>Xanthomonas</taxon>
    </lineage>
</organism>
<keyword id="KW-0131">Cell cycle</keyword>
<keyword id="KW-0132">Cell division</keyword>
<keyword id="KW-0997">Cell inner membrane</keyword>
<keyword id="KW-1003">Cell membrane</keyword>
<keyword id="KW-0472">Membrane</keyword>
<keyword id="KW-0812">Transmembrane</keyword>
<keyword id="KW-1133">Transmembrane helix</keyword>
<reference key="1">
    <citation type="journal article" date="2005" name="Genome Res.">
        <title>Comparative and functional genomic analyses of the pathogenicity of phytopathogen Xanthomonas campestris pv. campestris.</title>
        <authorList>
            <person name="Qian W."/>
            <person name="Jia Y."/>
            <person name="Ren S.-X."/>
            <person name="He Y.-Q."/>
            <person name="Feng J.-X."/>
            <person name="Lu L.-F."/>
            <person name="Sun Q."/>
            <person name="Ying G."/>
            <person name="Tang D.-J."/>
            <person name="Tang H."/>
            <person name="Wu W."/>
            <person name="Hao P."/>
            <person name="Wang L."/>
            <person name="Jiang B.-L."/>
            <person name="Zeng S."/>
            <person name="Gu W.-Y."/>
            <person name="Lu G."/>
            <person name="Rong L."/>
            <person name="Tian Y."/>
            <person name="Yao Z."/>
            <person name="Fu G."/>
            <person name="Chen B."/>
            <person name="Fang R."/>
            <person name="Qiang B."/>
            <person name="Chen Z."/>
            <person name="Zhao G.-P."/>
            <person name="Tang J.-L."/>
            <person name="He C."/>
        </authorList>
    </citation>
    <scope>NUCLEOTIDE SEQUENCE [LARGE SCALE GENOMIC DNA]</scope>
    <source>
        <strain>8004</strain>
    </source>
</reference>
<sequence>MSDMAMIRIGILIAGLLLVAAIFLFGRPKKSPQGRRVDKDDTQPRERREPVISSGVDADGMPFERSDTGAEQSELELDDQDGAGGNDVGKRPNQDFDKIVSLFVAAKAGQVLRGEDVVVAAEKTGLVFGHMNVFHRLVEGHPERGPIFSMASILKPGSFDMANIREMQTPAIAFFLTLPAPMTALDAWEKMLPTVQRMAELLDGVVLDDSRNALGRQRVAHIRDELRAYDRQHQAPPLTKSPRW</sequence>
<comment type="function">
    <text evidence="1">Essential cell division protein that stabilizes the FtsZ protofilaments by cross-linking them and that serves as a cytoplasmic membrane anchor for the Z ring. Also required for the recruitment to the septal ring of downstream cell division proteins.</text>
</comment>
<comment type="subunit">
    <text evidence="1">Interacts with FtsZ via their C-terminal domains.</text>
</comment>
<comment type="subcellular location">
    <subcellularLocation>
        <location evidence="1">Cell inner membrane</location>
        <topology evidence="1">Single-pass type I membrane protein</topology>
    </subcellularLocation>
    <text evidence="1">Localizes to the Z ring in an FtsZ-dependent manner.</text>
</comment>
<comment type="similarity">
    <text evidence="1">Belongs to the ZipA family.</text>
</comment>
<gene>
    <name evidence="1" type="primary">zipA</name>
    <name type="ordered locus">XC_2666</name>
</gene>
<accession>Q4UTA8</accession>
<proteinExistence type="inferred from homology"/>